<reference key="1">
    <citation type="submission" date="2007-11" db="EMBL/GenBank/DDBJ databases">
        <authorList>
            <consortium name="The Salmonella enterica serovar Paratyphi B Genome Sequencing Project"/>
            <person name="McClelland M."/>
            <person name="Sanderson E.K."/>
            <person name="Porwollik S."/>
            <person name="Spieth J."/>
            <person name="Clifton W.S."/>
            <person name="Fulton R."/>
            <person name="Cordes M."/>
            <person name="Wollam A."/>
            <person name="Shah N."/>
            <person name="Pepin K."/>
            <person name="Bhonagiri V."/>
            <person name="Nash W."/>
            <person name="Johnson M."/>
            <person name="Thiruvilangam P."/>
            <person name="Wilson R."/>
        </authorList>
    </citation>
    <scope>NUCLEOTIDE SEQUENCE [LARGE SCALE GENOMIC DNA]</scope>
    <source>
        <strain>ATCC BAA-1250 / SPB7</strain>
    </source>
</reference>
<proteinExistence type="inferred from homology"/>
<dbReference type="EC" id="6.3.4.21" evidence="1"/>
<dbReference type="EMBL" id="CP000886">
    <property type="protein sequence ID" value="ABX67883.1"/>
    <property type="molecule type" value="Genomic_DNA"/>
</dbReference>
<dbReference type="RefSeq" id="WP_000191406.1">
    <property type="nucleotide sequence ID" value="NC_010102.1"/>
</dbReference>
<dbReference type="SMR" id="A9N6Y6"/>
<dbReference type="KEGG" id="spq:SPAB_02503"/>
<dbReference type="PATRIC" id="fig|1016998.12.peg.2371"/>
<dbReference type="HOGENOM" id="CLU_030991_1_0_6"/>
<dbReference type="BioCyc" id="SENT1016998:SPAB_RS10185-MONOMER"/>
<dbReference type="UniPathway" id="UPA00253">
    <property type="reaction ID" value="UER00457"/>
</dbReference>
<dbReference type="Proteomes" id="UP000008556">
    <property type="component" value="Chromosome"/>
</dbReference>
<dbReference type="GO" id="GO:0005829">
    <property type="term" value="C:cytosol"/>
    <property type="evidence" value="ECO:0007669"/>
    <property type="project" value="TreeGrafter"/>
</dbReference>
<dbReference type="GO" id="GO:0004516">
    <property type="term" value="F:nicotinate phosphoribosyltransferase activity"/>
    <property type="evidence" value="ECO:0007669"/>
    <property type="project" value="UniProtKB-UniRule"/>
</dbReference>
<dbReference type="GO" id="GO:0034355">
    <property type="term" value="P:NAD biosynthetic process via the salvage pathway"/>
    <property type="evidence" value="ECO:0007669"/>
    <property type="project" value="TreeGrafter"/>
</dbReference>
<dbReference type="CDD" id="cd01401">
    <property type="entry name" value="PncB_like"/>
    <property type="match status" value="1"/>
</dbReference>
<dbReference type="FunFam" id="3.20.140.10:FF:000001">
    <property type="entry name" value="Nicotinate phosphoribosyltransferase"/>
    <property type="match status" value="1"/>
</dbReference>
<dbReference type="Gene3D" id="3.20.140.10">
    <property type="entry name" value="nicotinate phosphoribosyltransferase"/>
    <property type="match status" value="1"/>
</dbReference>
<dbReference type="HAMAP" id="MF_00570">
    <property type="entry name" value="NAPRTase"/>
    <property type="match status" value="1"/>
</dbReference>
<dbReference type="InterPro" id="IPR041525">
    <property type="entry name" value="N/Namide_PRibTrfase"/>
</dbReference>
<dbReference type="InterPro" id="IPR040727">
    <property type="entry name" value="NAPRTase_N"/>
</dbReference>
<dbReference type="InterPro" id="IPR006406">
    <property type="entry name" value="Nic_PRibTrfase"/>
</dbReference>
<dbReference type="InterPro" id="IPR007229">
    <property type="entry name" value="Nic_PRibTrfase-Fam"/>
</dbReference>
<dbReference type="InterPro" id="IPR036068">
    <property type="entry name" value="Nicotinate_pribotase-like_C"/>
</dbReference>
<dbReference type="NCBIfam" id="TIGR01514">
    <property type="entry name" value="NAPRTase"/>
    <property type="match status" value="1"/>
</dbReference>
<dbReference type="NCBIfam" id="NF003704">
    <property type="entry name" value="PRK05321.1"/>
    <property type="match status" value="1"/>
</dbReference>
<dbReference type="PANTHER" id="PTHR11098">
    <property type="entry name" value="NICOTINATE PHOSPHORIBOSYLTRANSFERASE"/>
    <property type="match status" value="1"/>
</dbReference>
<dbReference type="PANTHER" id="PTHR11098:SF1">
    <property type="entry name" value="NICOTINATE PHOSPHORIBOSYLTRANSFERASE"/>
    <property type="match status" value="1"/>
</dbReference>
<dbReference type="Pfam" id="PF04095">
    <property type="entry name" value="NAPRTase"/>
    <property type="match status" value="1"/>
</dbReference>
<dbReference type="Pfam" id="PF17767">
    <property type="entry name" value="NAPRTase_N"/>
    <property type="match status" value="1"/>
</dbReference>
<dbReference type="PIRSF" id="PIRSF000484">
    <property type="entry name" value="NAPRT"/>
    <property type="match status" value="1"/>
</dbReference>
<dbReference type="SUPFAM" id="SSF51690">
    <property type="entry name" value="Nicotinate/Quinolinate PRTase C-terminal domain-like"/>
    <property type="match status" value="1"/>
</dbReference>
<dbReference type="SUPFAM" id="SSF54675">
    <property type="entry name" value="Nicotinate/Quinolinate PRTase N-terminal domain-like"/>
    <property type="match status" value="1"/>
</dbReference>
<sequence>MTQFASPVLHSLLDTDAYKLHMQQAVFHHYYDVQVAAEFRCRGDDLLGIYADAIREQVDAMQHLRLQEDEFQWLSGLPFFKPDYLNWLREFRYNPAQVCVTNDNGKLNIRLTGPWREVIMWEVPLLAVISELVHHYRSPNAGVDQALDALESKLVDFTALTANLDMSRFHLMDFGTRRRFSREVQQAIVKRLQQESWFVGTSNYDLARRLALTPMGTQAHEWFQAHQQISPDLATSQRAALAAWLNEYPDQLGIALTDCITMDAFLRDFGIEFASRYQGLRHDSGDPVAWGEKAIAHYEKLGIDPLTKTLVFSDNLDLQKAVELYRHFASRVQLSFGIGTRLTCDIPQVKPLNIVIKLVECNGKPVAKLSDSPGKTICHDKAFVRALRKAFDLPQVRKAS</sequence>
<keyword id="KW-0436">Ligase</keyword>
<keyword id="KW-0597">Phosphoprotein</keyword>
<keyword id="KW-0662">Pyridine nucleotide biosynthesis</keyword>
<protein>
    <recommendedName>
        <fullName evidence="1">Nicotinate phosphoribosyltransferase</fullName>
        <shortName evidence="1">NAPRTase</shortName>
        <ecNumber evidence="1">6.3.4.21</ecNumber>
    </recommendedName>
</protein>
<evidence type="ECO:0000255" key="1">
    <source>
        <dbReference type="HAMAP-Rule" id="MF_00570"/>
    </source>
</evidence>
<gene>
    <name evidence="1" type="primary">pncB</name>
    <name type="ordered locus">SPAB_02503</name>
</gene>
<comment type="function">
    <text evidence="1">Catalyzes the synthesis of beta-nicotinate D-ribonucleotide from nicotinate and 5-phospho-D-ribose 1-phosphate at the expense of ATP.</text>
</comment>
<comment type="catalytic activity">
    <reaction evidence="1">
        <text>nicotinate + 5-phospho-alpha-D-ribose 1-diphosphate + ATP + H2O = nicotinate beta-D-ribonucleotide + ADP + phosphate + diphosphate</text>
        <dbReference type="Rhea" id="RHEA:36163"/>
        <dbReference type="ChEBI" id="CHEBI:15377"/>
        <dbReference type="ChEBI" id="CHEBI:30616"/>
        <dbReference type="ChEBI" id="CHEBI:32544"/>
        <dbReference type="ChEBI" id="CHEBI:33019"/>
        <dbReference type="ChEBI" id="CHEBI:43474"/>
        <dbReference type="ChEBI" id="CHEBI:57502"/>
        <dbReference type="ChEBI" id="CHEBI:58017"/>
        <dbReference type="ChEBI" id="CHEBI:456216"/>
        <dbReference type="EC" id="6.3.4.21"/>
    </reaction>
</comment>
<comment type="pathway">
    <text evidence="1">Cofactor biosynthesis; NAD(+) biosynthesis; nicotinate D-ribonucleotide from nicotinate: step 1/1.</text>
</comment>
<comment type="PTM">
    <text evidence="1">Transiently phosphorylated on a His residue during the reaction cycle. Phosphorylation strongly increases the affinity for substrates and increases the rate of nicotinate D-ribonucleotide production. Dephosphorylation regenerates the low-affinity form of the enzyme, leading to product release.</text>
</comment>
<comment type="similarity">
    <text evidence="1">Belongs to the NAPRTase family.</text>
</comment>
<name>PNCB_SALPB</name>
<organism>
    <name type="scientific">Salmonella paratyphi B (strain ATCC BAA-1250 / SPB7)</name>
    <dbReference type="NCBI Taxonomy" id="1016998"/>
    <lineage>
        <taxon>Bacteria</taxon>
        <taxon>Pseudomonadati</taxon>
        <taxon>Pseudomonadota</taxon>
        <taxon>Gammaproteobacteria</taxon>
        <taxon>Enterobacterales</taxon>
        <taxon>Enterobacteriaceae</taxon>
        <taxon>Salmonella</taxon>
    </lineage>
</organism>
<accession>A9N6Y6</accession>
<feature type="chain" id="PRO_1000082328" description="Nicotinate phosphoribosyltransferase">
    <location>
        <begin position="1"/>
        <end position="400"/>
    </location>
</feature>
<feature type="modified residue" description="Phosphohistidine; by autocatalysis" evidence="1">
    <location>
        <position position="220"/>
    </location>
</feature>